<protein>
    <recommendedName>
        <fullName>Protein DPCD</fullName>
    </recommendedName>
</protein>
<organism>
    <name type="scientific">Xenopus laevis</name>
    <name type="common">African clawed frog</name>
    <dbReference type="NCBI Taxonomy" id="8355"/>
    <lineage>
        <taxon>Eukaryota</taxon>
        <taxon>Metazoa</taxon>
        <taxon>Chordata</taxon>
        <taxon>Craniata</taxon>
        <taxon>Vertebrata</taxon>
        <taxon>Euteleostomi</taxon>
        <taxon>Amphibia</taxon>
        <taxon>Batrachia</taxon>
        <taxon>Anura</taxon>
        <taxon>Pipoidea</taxon>
        <taxon>Pipidae</taxon>
        <taxon>Xenopodinae</taxon>
        <taxon>Xenopus</taxon>
        <taxon>Xenopus</taxon>
    </lineage>
</organism>
<reference key="1">
    <citation type="submission" date="2007-05" db="EMBL/GenBank/DDBJ databases">
        <authorList>
            <consortium name="NIH - Xenopus Gene Collection (XGC) project"/>
        </authorList>
    </citation>
    <scope>NUCLEOTIDE SEQUENCE [LARGE SCALE MRNA]</scope>
    <source>
        <tissue>Testis</tissue>
    </source>
</reference>
<name>DPCD_XENLA</name>
<sequence>MALQGWLESLKAAQKTCILQDGRRKVHFLFTDGKEMAEEYDAKSHELIVRKWRQKSGLGAYGQWQIEVGDPPLPGAGTIQPDFLKESSSNPTFTRKDTKSSFQWRIRNLPYPKEVYSVTVDKKDRCCIIRTTNKKYYKKFSIPDLDRCHLDLNENAISFAHANNTLVVTYEKPKEILSIEEELQREVKSMKATTDGDVECKTQ</sequence>
<comment type="similarity">
    <text evidence="1">Belongs to the DPCD family.</text>
</comment>
<gene>
    <name type="primary">dpcd</name>
</gene>
<evidence type="ECO:0000305" key="1"/>
<proteinExistence type="evidence at transcript level"/>
<feature type="chain" id="PRO_0000323727" description="Protein DPCD">
    <location>
        <begin position="1"/>
        <end position="203"/>
    </location>
</feature>
<keyword id="KW-1185">Reference proteome</keyword>
<dbReference type="EMBL" id="BC141744">
    <property type="protein sequence ID" value="AAI41745.1"/>
    <property type="molecule type" value="mRNA"/>
</dbReference>
<dbReference type="RefSeq" id="NP_001092165.1">
    <property type="nucleotide sequence ID" value="NM_001098695.1"/>
</dbReference>
<dbReference type="BioGRID" id="674641">
    <property type="interactions" value="2"/>
</dbReference>
<dbReference type="IntAct" id="A5D8N2">
    <property type="interactions" value="1"/>
</dbReference>
<dbReference type="GeneID" id="100049755"/>
<dbReference type="KEGG" id="xla:100049755"/>
<dbReference type="AGR" id="Xenbase:XB-GENE-978029"/>
<dbReference type="CTD" id="100049755"/>
<dbReference type="Xenbase" id="XB-GENE-978029">
    <property type="gene designation" value="dpcd.S"/>
</dbReference>
<dbReference type="OMA" id="PILCEME"/>
<dbReference type="OrthoDB" id="10256139at2759"/>
<dbReference type="Proteomes" id="UP000186698">
    <property type="component" value="Chromosome 7S"/>
</dbReference>
<dbReference type="Bgee" id="100049755">
    <property type="expression patterns" value="Expressed in testis and 19 other cell types or tissues"/>
</dbReference>
<dbReference type="InterPro" id="IPR026224">
    <property type="entry name" value="DPCD"/>
</dbReference>
<dbReference type="PANTHER" id="PTHR31921">
    <property type="entry name" value="PROTEIN DPCD"/>
    <property type="match status" value="1"/>
</dbReference>
<dbReference type="PANTHER" id="PTHR31921:SF1">
    <property type="entry name" value="PROTEIN DPCD"/>
    <property type="match status" value="1"/>
</dbReference>
<dbReference type="Pfam" id="PF14913">
    <property type="entry name" value="DPCD"/>
    <property type="match status" value="1"/>
</dbReference>
<dbReference type="PRINTS" id="PR02065">
    <property type="entry name" value="PROTEINDPCD"/>
</dbReference>
<accession>A5D8N2</accession>